<organism>
    <name type="scientific">Bos taurus</name>
    <name type="common">Bovine</name>
    <dbReference type="NCBI Taxonomy" id="9913"/>
    <lineage>
        <taxon>Eukaryota</taxon>
        <taxon>Metazoa</taxon>
        <taxon>Chordata</taxon>
        <taxon>Craniata</taxon>
        <taxon>Vertebrata</taxon>
        <taxon>Euteleostomi</taxon>
        <taxon>Mammalia</taxon>
        <taxon>Eutheria</taxon>
        <taxon>Laurasiatheria</taxon>
        <taxon>Artiodactyla</taxon>
        <taxon>Ruminantia</taxon>
        <taxon>Pecora</taxon>
        <taxon>Bovidae</taxon>
        <taxon>Bovinae</taxon>
        <taxon>Bos</taxon>
    </lineage>
</organism>
<evidence type="ECO:0000250" key="1"/>
<evidence type="ECO:0000250" key="2">
    <source>
        <dbReference type="UniProtKB" id="Q78PY7"/>
    </source>
</evidence>
<evidence type="ECO:0000250" key="3">
    <source>
        <dbReference type="UniProtKB" id="Q7KZF4"/>
    </source>
</evidence>
<evidence type="ECO:0000255" key="4"/>
<evidence type="ECO:0000255" key="5">
    <source>
        <dbReference type="PROSITE-ProRule" id="PRU00211"/>
    </source>
</evidence>
<evidence type="ECO:0000255" key="6">
    <source>
        <dbReference type="PROSITE-ProRule" id="PRU00272"/>
    </source>
</evidence>
<evidence type="ECO:0000269" key="7">
    <source>
    </source>
</evidence>
<comment type="function">
    <text evidence="2 3">Endonuclease that mediates miRNA decay of both protein-free and AGO2-loaded miRNAs (By similarity). As part of its function in miRNA decay, regulates mRNAs involved in G1-to-S phase transition (By similarity). Functions as a bridging factor between STAT6 and the basal transcription factor (By similarity). Plays a role in PIM1 regulation of MYB activity (By similarity). Functions as a transcriptional coactivator for STAT5 (By similarity).</text>
</comment>
<comment type="catalytic activity">
    <reaction evidence="3">
        <text>Endonucleolytic cleavage to nucleoside 3'-phosphates and 3'-phosphooligonucleotide end-products.</text>
        <dbReference type="EC" id="3.1.31.1"/>
    </reaction>
</comment>
<comment type="subunit">
    <text evidence="2 3">Forms a ternary complex with STAT6 and POLR2A (By similarity). Associates with the RNA-induced silencing complex (RISC) (By similarity). Interacts with the RISC components AGO2, FMR1 and TNRC6A (By similarity). Interacts with GTF2E1 and GTF2E2 (By similarity). Interacts with PIM1 (By similarity). Interacts with STAT5 (By similarity). Interacts with SYT11 (via C2 2 domain); the interaction with SYT11 is direct (By similarity).</text>
</comment>
<comment type="subcellular location">
    <subcellularLocation>
        <location evidence="3">Cytoplasm</location>
    </subcellularLocation>
    <subcellularLocation>
        <location evidence="3">Nucleus</location>
    </subcellularLocation>
    <subcellularLocation>
        <location evidence="3">Melanosome</location>
    </subcellularLocation>
    <text evidence="3">In IL-4 stimulated cells colocalizes with STAT6 in the nucleus.</text>
</comment>
<comment type="tissue specificity">
    <text evidence="7">In lactating cows highly expressed in mammary epithelial cells.</text>
</comment>
<comment type="induction">
    <text>Protein levels increased in response to lactogenic hormones during lactation and correlated with the induction of beta casein gene expression.</text>
</comment>
<comment type="PTM">
    <text evidence="1">Phosphorylated by PIM1 in vitro.</text>
</comment>
<proteinExistence type="evidence at protein level"/>
<accession>Q863B3</accession>
<accession>Q3MHZ9</accession>
<gene>
    <name type="primary">SND1</name>
</gene>
<reference key="1">
    <citation type="journal article" date="2001" name="J. Endocrinol.">
        <title>The p100 coactivator is present in the nuclei of mammary epithelial cells and its abundance is increased in response to prolactin in culture and in mammary tissue during lactation.</title>
        <authorList>
            <person name="Broadhurst M.K."/>
            <person name="Wheeler T.T."/>
        </authorList>
    </citation>
    <scope>NUCLEOTIDE SEQUENCE [MRNA]</scope>
    <scope>PROTEIN SEQUENCE OF 162-167; 745-752 AND 849-867</scope>
    <scope>TISSUE SPECIFICITY</scope>
    <scope>SUBCELLULAR LOCATION</scope>
    <source>
        <tissue>Lactating mammary gland</tissue>
    </source>
</reference>
<reference key="2">
    <citation type="submission" date="2005-09" db="EMBL/GenBank/DDBJ databases">
        <authorList>
            <consortium name="NIH - Mammalian Gene Collection (MGC) project"/>
        </authorList>
    </citation>
    <scope>NUCLEOTIDE SEQUENCE [LARGE SCALE MRNA]</scope>
    <source>
        <strain>Hereford</strain>
        <tissue>Ascending colon</tissue>
    </source>
</reference>
<name>SND1_BOVIN</name>
<feature type="initiator methionine" description="Removed" evidence="3">
    <location>
        <position position="1"/>
    </location>
</feature>
<feature type="chain" id="PRO_0000183179" description="Staphylococcal nuclease domain-containing protein 1">
    <location>
        <begin position="2"/>
        <end position="910"/>
    </location>
</feature>
<feature type="domain" description="TNase-like 1" evidence="6">
    <location>
        <begin position="18"/>
        <end position="166"/>
    </location>
</feature>
<feature type="domain" description="TNase-like 2" evidence="6">
    <location>
        <begin position="193"/>
        <end position="328"/>
    </location>
</feature>
<feature type="domain" description="TNase-like 3" evidence="6">
    <location>
        <begin position="341"/>
        <end position="496"/>
    </location>
</feature>
<feature type="domain" description="TNase-like 4" evidence="6">
    <location>
        <begin position="525"/>
        <end position="660"/>
    </location>
</feature>
<feature type="domain" description="Tudor" evidence="5">
    <location>
        <begin position="729"/>
        <end position="787"/>
    </location>
</feature>
<feature type="short sequence motif" description="Nuclear localization signal" evidence="4">
    <location>
        <begin position="321"/>
        <end position="325"/>
    </location>
</feature>
<feature type="short sequence motif" description="Nuclear localization signal" evidence="4">
    <location>
        <begin position="388"/>
        <end position="392"/>
    </location>
</feature>
<feature type="modified residue" description="N-acetylalanine" evidence="3">
    <location>
        <position position="2"/>
    </location>
</feature>
<feature type="modified residue" description="Phosphothreonine" evidence="3">
    <location>
        <position position="103"/>
    </location>
</feature>
<feature type="modified residue" description="N6-acetyllysine" evidence="3">
    <location>
        <position position="193"/>
    </location>
</feature>
<feature type="modified residue" description="Phosphothreonine" evidence="3">
    <location>
        <position position="240"/>
    </location>
</feature>
<feature type="modified residue" description="Phosphoserine" evidence="3">
    <location>
        <position position="426"/>
    </location>
</feature>
<feature type="modified residue" description="N6-acetyllysine" evidence="3">
    <location>
        <position position="641"/>
    </location>
</feature>
<feature type="modified residue" description="Phosphoserine" evidence="3">
    <location>
        <position position="645"/>
    </location>
</feature>
<feature type="modified residue" description="Phosphothreonine" evidence="3">
    <location>
        <position position="779"/>
    </location>
</feature>
<feature type="modified residue" description="Phosphoserine" evidence="3">
    <location>
        <position position="785"/>
    </location>
</feature>
<feature type="modified residue" description="Phosphoserine" evidence="3">
    <location>
        <position position="909"/>
    </location>
</feature>
<feature type="cross-link" description="Glycyl lysine isopeptide (Lys-Gly) (interchain with G-Cter in SUMO2)" evidence="3">
    <location>
        <position position="513"/>
    </location>
</feature>
<keyword id="KW-0007">Acetylation</keyword>
<keyword id="KW-0963">Cytoplasm</keyword>
<keyword id="KW-0903">Direct protein sequencing</keyword>
<keyword id="KW-0255">Endonuclease</keyword>
<keyword id="KW-0378">Hydrolase</keyword>
<keyword id="KW-1017">Isopeptide bond</keyword>
<keyword id="KW-0540">Nuclease</keyword>
<keyword id="KW-0539">Nucleus</keyword>
<keyword id="KW-0597">Phosphoprotein</keyword>
<keyword id="KW-1185">Reference proteome</keyword>
<keyword id="KW-0677">Repeat</keyword>
<keyword id="KW-0804">Transcription</keyword>
<keyword id="KW-0805">Transcription regulation</keyword>
<keyword id="KW-0832">Ubl conjugation</keyword>
<sequence>MASSAQSGGSSGGPAVPTVQRGIVKMVLSGCAIIVRGQPRGGPPPERQINLSNIRAGNLARRAAVAQPDAKDTPDEPWAFPAREFLRKKLIGKEVCFTIENKTPQGREYGMIYLGKDTNGENIAESLVAEGLATRREGMRANNPEQNRLAECEEQAKASKKGMWSEGNGSHTIRDLKYTIENPRHFVDSHHQKPVNAIIEHVRDGSVVRALLLPDYYLVTVMLSGIKCPTFRREADGSETPEPFAAEAKFFTESRLLQRDVQIILESCHNQNILGTILHPNGNITELLLKEGFARCVDWSIAVYTRGAEKLRAAERFAKERRLRIWRDYVAPTANLDQKDKQFVAKVMQVLNADAIVVKLNSGDYKTIHLSSIRPPRLEGENTQDKNKKLRPLYDIPYMFEAREFLRKKLIGKKVNVTVDYIRPASPATDTVPAFSERTCATVTIGGINIAEALVSKGLATVIRYRQDDDQRSSHYDELLAAEARAIKNGKGLHSKKEVPIHRVADISGDTQKAKQFLPFLQRAGRSEAVVEYVFSGSRLKLYLPKETCLITFLLAGIECPRGARNLPGLVQEGEPFSEEATLFTKELVLQREVEVEVESMDKAGNFIGWLHIDGANLSVLLVEHALSKVHFTAERSAYYKSLLSAEEAAKQKKEKVWAHYEEQPVEELMPVLEEKERSASYKPVFVTEITDDLHFYVQDVETGTQLEKLMENMRNDIASHPPVEGSYAPRRGEFCIAKFVDGEWYRARVEKVESPAKVHVFYIDYGNREILPSTRLGTLPPAFSTRVLPAQATEYAFAFIQVPQDEDARTDAVDSVVRDIQNTQCLLNVEHLSAGCPHVTLQFADSKGDVGLGLVKEGLVMVEVRKEKQFQKVITEYLNAQESAKSARLNLWRYGDFRADDADEFGYSR</sequence>
<dbReference type="EC" id="3.1.31.1" evidence="3"/>
<dbReference type="EMBL" id="AY273893">
    <property type="protein sequence ID" value="AAP31682.1"/>
    <property type="molecule type" value="mRNA"/>
</dbReference>
<dbReference type="EMBL" id="BC104504">
    <property type="protein sequence ID" value="AAI04505.1"/>
    <property type="molecule type" value="mRNA"/>
</dbReference>
<dbReference type="RefSeq" id="NP_991353.1">
    <property type="nucleotide sequence ID" value="NM_205784.1"/>
</dbReference>
<dbReference type="SMR" id="Q863B3"/>
<dbReference type="FunCoup" id="Q863B3">
    <property type="interactions" value="3845"/>
</dbReference>
<dbReference type="STRING" id="9913.ENSBTAP00000014154"/>
<dbReference type="PaxDb" id="9913-ENSBTAP00000014154"/>
<dbReference type="PeptideAtlas" id="Q863B3"/>
<dbReference type="Ensembl" id="ENSBTAT00000014154.7">
    <property type="protein sequence ID" value="ENSBTAP00000014154.5"/>
    <property type="gene ID" value="ENSBTAG00000010692.7"/>
</dbReference>
<dbReference type="GeneID" id="404098"/>
<dbReference type="KEGG" id="bta:404098"/>
<dbReference type="CTD" id="27044"/>
<dbReference type="VEuPathDB" id="HostDB:ENSBTAG00000010692"/>
<dbReference type="VGNC" id="VGNC:35063">
    <property type="gene designation" value="SND1"/>
</dbReference>
<dbReference type="eggNOG" id="KOG2039">
    <property type="taxonomic scope" value="Eukaryota"/>
</dbReference>
<dbReference type="GeneTree" id="ENSGT00510000047270"/>
<dbReference type="HOGENOM" id="CLU_005966_0_0_1"/>
<dbReference type="InParanoid" id="Q863B3"/>
<dbReference type="OMA" id="ARCADHH"/>
<dbReference type="OrthoDB" id="10023235at2759"/>
<dbReference type="TreeFam" id="TF300615"/>
<dbReference type="CD-CODE" id="D7FE2080">
    <property type="entry name" value="Nucleolus"/>
</dbReference>
<dbReference type="Proteomes" id="UP000009136">
    <property type="component" value="Chromosome 4"/>
</dbReference>
<dbReference type="Bgee" id="ENSBTAG00000010692">
    <property type="expression patterns" value="Expressed in prostate gland and 110 other cell types or tissues"/>
</dbReference>
<dbReference type="GO" id="GO:0005829">
    <property type="term" value="C:cytosol"/>
    <property type="evidence" value="ECO:0000318"/>
    <property type="project" value="GO_Central"/>
</dbReference>
<dbReference type="GO" id="GO:0097433">
    <property type="term" value="C:dense body"/>
    <property type="evidence" value="ECO:0007669"/>
    <property type="project" value="Ensembl"/>
</dbReference>
<dbReference type="GO" id="GO:0042470">
    <property type="term" value="C:melanosome"/>
    <property type="evidence" value="ECO:0007669"/>
    <property type="project" value="UniProtKB-SubCell"/>
</dbReference>
<dbReference type="GO" id="GO:0005634">
    <property type="term" value="C:nucleus"/>
    <property type="evidence" value="ECO:0000318"/>
    <property type="project" value="GO_Central"/>
</dbReference>
<dbReference type="GO" id="GO:0031332">
    <property type="term" value="C:RNAi effector complex"/>
    <property type="evidence" value="ECO:0007669"/>
    <property type="project" value="InterPro"/>
</dbReference>
<dbReference type="GO" id="GO:0016894">
    <property type="term" value="F:endonuclease activity, active with either ribo- or deoxyribonucleic acids and producing 3'-phosphomonoesters"/>
    <property type="evidence" value="ECO:0007669"/>
    <property type="project" value="UniProtKB-EC"/>
</dbReference>
<dbReference type="GO" id="GO:0004518">
    <property type="term" value="F:nuclease activity"/>
    <property type="evidence" value="ECO:0000318"/>
    <property type="project" value="GO_Central"/>
</dbReference>
<dbReference type="GO" id="GO:1905172">
    <property type="term" value="F:RISC complex binding"/>
    <property type="evidence" value="ECO:0007669"/>
    <property type="project" value="Ensembl"/>
</dbReference>
<dbReference type="GO" id="GO:0003723">
    <property type="term" value="F:RNA binding"/>
    <property type="evidence" value="ECO:0000318"/>
    <property type="project" value="GO_Central"/>
</dbReference>
<dbReference type="GO" id="GO:0004521">
    <property type="term" value="F:RNA endonuclease activity"/>
    <property type="evidence" value="ECO:0007669"/>
    <property type="project" value="Ensembl"/>
</dbReference>
<dbReference type="GO" id="GO:0010587">
    <property type="term" value="P:miRNA catabolic process"/>
    <property type="evidence" value="ECO:0007669"/>
    <property type="project" value="Ensembl"/>
</dbReference>
<dbReference type="GO" id="GO:0006402">
    <property type="term" value="P:mRNA catabolic process"/>
    <property type="evidence" value="ECO:0000318"/>
    <property type="project" value="GO_Central"/>
</dbReference>
<dbReference type="GO" id="GO:0010564">
    <property type="term" value="P:regulation of cell cycle process"/>
    <property type="evidence" value="ECO:0007669"/>
    <property type="project" value="Ensembl"/>
</dbReference>
<dbReference type="GO" id="GO:0031047">
    <property type="term" value="P:regulatory ncRNA-mediated gene silencing"/>
    <property type="evidence" value="ECO:0007669"/>
    <property type="project" value="InterPro"/>
</dbReference>
<dbReference type="CDD" id="cd00175">
    <property type="entry name" value="SNc"/>
    <property type="match status" value="4"/>
</dbReference>
<dbReference type="CDD" id="cd20433">
    <property type="entry name" value="Tudor_TDRD11"/>
    <property type="match status" value="1"/>
</dbReference>
<dbReference type="FunFam" id="2.30.30.140:FF:000047">
    <property type="entry name" value="Staphylococcal nuclease domain-containing protein"/>
    <property type="match status" value="1"/>
</dbReference>
<dbReference type="FunFam" id="2.40.50.90:FF:000001">
    <property type="entry name" value="Staphylococcal nuclease domain-containing protein"/>
    <property type="match status" value="1"/>
</dbReference>
<dbReference type="FunFam" id="2.40.50.90:FF:000002">
    <property type="entry name" value="Staphylococcal nuclease domain-containing protein"/>
    <property type="match status" value="1"/>
</dbReference>
<dbReference type="FunFam" id="2.40.50.90:FF:000003">
    <property type="entry name" value="Staphylococcal nuclease domain-containing protein"/>
    <property type="match status" value="1"/>
</dbReference>
<dbReference type="FunFam" id="2.40.50.90:FF:000004">
    <property type="entry name" value="Staphylococcal nuclease domain-containing protein"/>
    <property type="match status" value="1"/>
</dbReference>
<dbReference type="FunFam" id="2.40.50.90:FF:000005">
    <property type="entry name" value="Staphylococcal nuclease domain-containing protein"/>
    <property type="match status" value="1"/>
</dbReference>
<dbReference type="Gene3D" id="2.30.30.140">
    <property type="match status" value="1"/>
</dbReference>
<dbReference type="Gene3D" id="2.40.50.90">
    <property type="match status" value="5"/>
</dbReference>
<dbReference type="InterPro" id="IPR016685">
    <property type="entry name" value="Silence_cplx_Nase-comp_TudorSN"/>
</dbReference>
<dbReference type="InterPro" id="IPR035437">
    <property type="entry name" value="SNase_OB-fold_sf"/>
</dbReference>
<dbReference type="InterPro" id="IPR016071">
    <property type="entry name" value="Staphylococal_nuclease_OB-fold"/>
</dbReference>
<dbReference type="InterPro" id="IPR002071">
    <property type="entry name" value="Thermonucl_AS"/>
</dbReference>
<dbReference type="InterPro" id="IPR002999">
    <property type="entry name" value="Tudor"/>
</dbReference>
<dbReference type="InterPro" id="IPR047386">
    <property type="entry name" value="Tudor_TDRD11"/>
</dbReference>
<dbReference type="PANTHER" id="PTHR12302">
    <property type="entry name" value="EBNA2 BINDING PROTEIN P100"/>
    <property type="match status" value="1"/>
</dbReference>
<dbReference type="PANTHER" id="PTHR12302:SF2">
    <property type="entry name" value="STAPHYLOCOCCAL NUCLEASE DOMAIN-CONTAINING PROTEIN 1"/>
    <property type="match status" value="1"/>
</dbReference>
<dbReference type="Pfam" id="PF00565">
    <property type="entry name" value="SNase"/>
    <property type="match status" value="5"/>
</dbReference>
<dbReference type="Pfam" id="PF00567">
    <property type="entry name" value="TUDOR"/>
    <property type="match status" value="1"/>
</dbReference>
<dbReference type="PIRSF" id="PIRSF017179">
    <property type="entry name" value="RISC-Tudor-SN"/>
    <property type="match status" value="1"/>
</dbReference>
<dbReference type="SMART" id="SM00318">
    <property type="entry name" value="SNc"/>
    <property type="match status" value="4"/>
</dbReference>
<dbReference type="SMART" id="SM00333">
    <property type="entry name" value="TUDOR"/>
    <property type="match status" value="1"/>
</dbReference>
<dbReference type="SUPFAM" id="SSF50199">
    <property type="entry name" value="Staphylococcal nuclease"/>
    <property type="match status" value="5"/>
</dbReference>
<dbReference type="SUPFAM" id="SSF63748">
    <property type="entry name" value="Tudor/PWWP/MBT"/>
    <property type="match status" value="1"/>
</dbReference>
<dbReference type="PROSITE" id="PS01284">
    <property type="entry name" value="TNASE_2"/>
    <property type="match status" value="1"/>
</dbReference>
<dbReference type="PROSITE" id="PS50830">
    <property type="entry name" value="TNASE_3"/>
    <property type="match status" value="4"/>
</dbReference>
<dbReference type="PROSITE" id="PS50304">
    <property type="entry name" value="TUDOR"/>
    <property type="match status" value="1"/>
</dbReference>
<protein>
    <recommendedName>
        <fullName>Staphylococcal nuclease domain-containing protein 1</fullName>
        <ecNumber evidence="3">3.1.31.1</ecNumber>
    </recommendedName>
    <alternativeName>
        <fullName>100 kDa coactivator</fullName>
    </alternativeName>
    <alternativeName>
        <fullName>p100 co-activator</fullName>
    </alternativeName>
</protein>